<sequence length="555" mass="62617">MAETKKETLAEKVKRLSRGLRGSLVDSLKDEHTGSLRSDDQLLLKFHGMYQQDDRDRRDERALKKLERLYSFMIRLRIPGGMIGPVHWEALHNVAGENSTGTIKITTRQTVQLHGILKSKIKPTIKAFDSVFLDSIAACGDVNRNVTCTSNPAASPLHKEVFGYAGEISRSLLPKTRAYYEIWLDENLLAEKEEPEDPLYKDVYLPRKFKIAIAIPPYNDVDLFTNDIGLIAIIENGQLLGFNVAVGGGLGTTHGNPDTYPRVGTVFGFIPKKDILRVVYEIVTVQRDFGNREDRKLSRLKYTLDRLGVEFYKREVEKRAGISFESAKDFQFTTRSDDFGWKQDAAGNWHYTVFVENGRVCDEHGYNLKTALLEVSKTRRATFRFTCNQNLILSDIFPKDKDLIESILVKFGVHRKTAEVSPIRKNSIACVALNTCSLALAEAQRYLPSLIDKIEPILSKHGLSEEPISIRMTGCPNGCARPYISEIGLVGTSYGKYNLHVGADAEGYRLNKKYKEDLDESAILQELDGLFGKFSKDRKGKESFGDYINRIGILK</sequence>
<comment type="function">
    <text evidence="1">Component of the sulfite reductase complex that catalyzes the 6-electron reduction of sulfite to sulfide. This is one of several activities required for the biosynthesis of L-cysteine from sulfate.</text>
</comment>
<comment type="catalytic activity">
    <reaction evidence="1">
        <text>hydrogen sulfide + 3 NADP(+) + 3 H2O = sulfite + 3 NADPH + 4 H(+)</text>
        <dbReference type="Rhea" id="RHEA:13801"/>
        <dbReference type="ChEBI" id="CHEBI:15377"/>
        <dbReference type="ChEBI" id="CHEBI:15378"/>
        <dbReference type="ChEBI" id="CHEBI:17359"/>
        <dbReference type="ChEBI" id="CHEBI:29919"/>
        <dbReference type="ChEBI" id="CHEBI:57783"/>
        <dbReference type="ChEBI" id="CHEBI:58349"/>
        <dbReference type="EC" id="1.8.1.2"/>
    </reaction>
</comment>
<comment type="cofactor">
    <cofactor evidence="1">
        <name>siroheme</name>
        <dbReference type="ChEBI" id="CHEBI:60052"/>
    </cofactor>
    <text evidence="1">Binds 1 siroheme per subunit.</text>
</comment>
<comment type="cofactor">
    <cofactor evidence="1">
        <name>[4Fe-4S] cluster</name>
        <dbReference type="ChEBI" id="CHEBI:49883"/>
    </cofactor>
    <text evidence="1">Binds 1 [4Fe-4S] cluster per subunit.</text>
</comment>
<comment type="pathway">
    <text evidence="1">Sulfur metabolism; hydrogen sulfide biosynthesis; hydrogen sulfide from sulfite (NADPH route): step 1/1.</text>
</comment>
<comment type="subunit">
    <text evidence="1">Alpha(8)-beta(8). The alpha component is a flavoprotein, the beta component is a hemoprotein.</text>
</comment>
<comment type="similarity">
    <text evidence="1">Belongs to the nitrite and sulfite reductase 4Fe-4S domain family.</text>
</comment>
<protein>
    <recommendedName>
        <fullName evidence="1">Sulfite reductase [NADPH] hemoprotein beta-component</fullName>
        <shortName evidence="1">SiR-HP</shortName>
        <shortName evidence="1">SiRHP</shortName>
        <ecNumber evidence="1">1.8.1.2</ecNumber>
    </recommendedName>
</protein>
<feature type="chain" id="PRO_0000388491" description="Sulfite reductase [NADPH] hemoprotein beta-component">
    <location>
        <begin position="1"/>
        <end position="555"/>
    </location>
</feature>
<feature type="binding site" evidence="1">
    <location>
        <position position="430"/>
    </location>
    <ligand>
        <name>[4Fe-4S] cluster</name>
        <dbReference type="ChEBI" id="CHEBI:49883"/>
    </ligand>
</feature>
<feature type="binding site" evidence="1">
    <location>
        <position position="436"/>
    </location>
    <ligand>
        <name>[4Fe-4S] cluster</name>
        <dbReference type="ChEBI" id="CHEBI:49883"/>
    </ligand>
</feature>
<feature type="binding site" evidence="1">
    <location>
        <position position="475"/>
    </location>
    <ligand>
        <name>[4Fe-4S] cluster</name>
        <dbReference type="ChEBI" id="CHEBI:49883"/>
    </ligand>
</feature>
<feature type="binding site" evidence="1">
    <location>
        <position position="479"/>
    </location>
    <ligand>
        <name>[4Fe-4S] cluster</name>
        <dbReference type="ChEBI" id="CHEBI:49883"/>
    </ligand>
</feature>
<feature type="binding site" description="axial binding residue" evidence="1">
    <location>
        <position position="479"/>
    </location>
    <ligand>
        <name>siroheme</name>
        <dbReference type="ChEBI" id="CHEBI:60052"/>
    </ligand>
    <ligandPart>
        <name>Fe</name>
        <dbReference type="ChEBI" id="CHEBI:18248"/>
    </ligandPart>
</feature>
<reference key="1">
    <citation type="journal article" date="2008" name="PLoS ONE">
        <title>Genome sequence of the saprophyte Leptospira biflexa provides insights into the evolution of Leptospira and the pathogenesis of leptospirosis.</title>
        <authorList>
            <person name="Picardeau M."/>
            <person name="Bulach D.M."/>
            <person name="Bouchier C."/>
            <person name="Zuerner R.L."/>
            <person name="Zidane N."/>
            <person name="Wilson P.J."/>
            <person name="Creno S."/>
            <person name="Kuczek E.S."/>
            <person name="Bommezzadri S."/>
            <person name="Davis J.C."/>
            <person name="McGrath A."/>
            <person name="Johnson M.J."/>
            <person name="Boursaux-Eude C."/>
            <person name="Seemann T."/>
            <person name="Rouy Z."/>
            <person name="Coppel R.L."/>
            <person name="Rood J.I."/>
            <person name="Lajus A."/>
            <person name="Davies J.K."/>
            <person name="Medigue C."/>
            <person name="Adler B."/>
        </authorList>
    </citation>
    <scope>NUCLEOTIDE SEQUENCE [LARGE SCALE GENOMIC DNA]</scope>
    <source>
        <strain>Patoc 1 / ATCC 23582 / Paris</strain>
    </source>
</reference>
<keyword id="KW-0004">4Fe-4S</keyword>
<keyword id="KW-0028">Amino-acid biosynthesis</keyword>
<keyword id="KW-0198">Cysteine biosynthesis</keyword>
<keyword id="KW-0349">Heme</keyword>
<keyword id="KW-0408">Iron</keyword>
<keyword id="KW-0411">Iron-sulfur</keyword>
<keyword id="KW-0479">Metal-binding</keyword>
<keyword id="KW-0521">NADP</keyword>
<keyword id="KW-0560">Oxidoreductase</keyword>
<keyword id="KW-1185">Reference proteome</keyword>
<organism>
    <name type="scientific">Leptospira biflexa serovar Patoc (strain Patoc 1 / ATCC 23582 / Paris)</name>
    <dbReference type="NCBI Taxonomy" id="456481"/>
    <lineage>
        <taxon>Bacteria</taxon>
        <taxon>Pseudomonadati</taxon>
        <taxon>Spirochaetota</taxon>
        <taxon>Spirochaetia</taxon>
        <taxon>Leptospirales</taxon>
        <taxon>Leptospiraceae</taxon>
        <taxon>Leptospira</taxon>
    </lineage>
</organism>
<evidence type="ECO:0000255" key="1">
    <source>
        <dbReference type="HAMAP-Rule" id="MF_01540"/>
    </source>
</evidence>
<gene>
    <name evidence="1" type="primary">cysI</name>
    <name type="ordered locus">LEPBI_I1181</name>
</gene>
<name>CYSI_LEPBP</name>
<proteinExistence type="inferred from homology"/>
<dbReference type="EC" id="1.8.1.2" evidence="1"/>
<dbReference type="EMBL" id="CP000786">
    <property type="protein sequence ID" value="ABZ97297.1"/>
    <property type="molecule type" value="Genomic_DNA"/>
</dbReference>
<dbReference type="RefSeq" id="WP_012388178.1">
    <property type="nucleotide sequence ID" value="NC_010602.1"/>
</dbReference>
<dbReference type="SMR" id="B0SNL6"/>
<dbReference type="STRING" id="456481.LEPBI_I1181"/>
<dbReference type="KEGG" id="lbi:LEPBI_I1181"/>
<dbReference type="HOGENOM" id="CLU_001975_3_2_12"/>
<dbReference type="OrthoDB" id="9803707at2"/>
<dbReference type="BioCyc" id="LBIF456481:LEPBI_RS05790-MONOMER"/>
<dbReference type="UniPathway" id="UPA00140">
    <property type="reaction ID" value="UER00207"/>
</dbReference>
<dbReference type="Proteomes" id="UP000001847">
    <property type="component" value="Chromosome I"/>
</dbReference>
<dbReference type="GO" id="GO:0009337">
    <property type="term" value="C:sulfite reductase complex (NADPH)"/>
    <property type="evidence" value="ECO:0007669"/>
    <property type="project" value="InterPro"/>
</dbReference>
<dbReference type="GO" id="GO:0051539">
    <property type="term" value="F:4 iron, 4 sulfur cluster binding"/>
    <property type="evidence" value="ECO:0007669"/>
    <property type="project" value="UniProtKB-KW"/>
</dbReference>
<dbReference type="GO" id="GO:0020037">
    <property type="term" value="F:heme binding"/>
    <property type="evidence" value="ECO:0007669"/>
    <property type="project" value="InterPro"/>
</dbReference>
<dbReference type="GO" id="GO:0046872">
    <property type="term" value="F:metal ion binding"/>
    <property type="evidence" value="ECO:0007669"/>
    <property type="project" value="UniProtKB-KW"/>
</dbReference>
<dbReference type="GO" id="GO:0050661">
    <property type="term" value="F:NADP binding"/>
    <property type="evidence" value="ECO:0007669"/>
    <property type="project" value="InterPro"/>
</dbReference>
<dbReference type="GO" id="GO:0050311">
    <property type="term" value="F:sulfite reductase (ferredoxin) activity"/>
    <property type="evidence" value="ECO:0007669"/>
    <property type="project" value="TreeGrafter"/>
</dbReference>
<dbReference type="GO" id="GO:0004783">
    <property type="term" value="F:sulfite reductase (NADPH) activity"/>
    <property type="evidence" value="ECO:0007669"/>
    <property type="project" value="UniProtKB-UniRule"/>
</dbReference>
<dbReference type="GO" id="GO:0019344">
    <property type="term" value="P:cysteine biosynthetic process"/>
    <property type="evidence" value="ECO:0007669"/>
    <property type="project" value="UniProtKB-KW"/>
</dbReference>
<dbReference type="GO" id="GO:0070814">
    <property type="term" value="P:hydrogen sulfide biosynthetic process"/>
    <property type="evidence" value="ECO:0007669"/>
    <property type="project" value="UniProtKB-UniRule"/>
</dbReference>
<dbReference type="GO" id="GO:0000103">
    <property type="term" value="P:sulfate assimilation"/>
    <property type="evidence" value="ECO:0007669"/>
    <property type="project" value="UniProtKB-UniRule"/>
</dbReference>
<dbReference type="FunFam" id="3.30.413.10:FF:000003">
    <property type="entry name" value="Sulfite reductase [NADPH] hemoprotein beta-component"/>
    <property type="match status" value="1"/>
</dbReference>
<dbReference type="Gene3D" id="3.30.413.10">
    <property type="entry name" value="Sulfite Reductase Hemoprotein, domain 1"/>
    <property type="match status" value="2"/>
</dbReference>
<dbReference type="HAMAP" id="MF_01540">
    <property type="entry name" value="CysI"/>
    <property type="match status" value="1"/>
</dbReference>
<dbReference type="InterPro" id="IPR011786">
    <property type="entry name" value="CysI"/>
</dbReference>
<dbReference type="InterPro" id="IPR005117">
    <property type="entry name" value="NiRdtase/SiRdtase_haem-b_fer"/>
</dbReference>
<dbReference type="InterPro" id="IPR036136">
    <property type="entry name" value="Nit/Sulf_reduc_fer-like_dom_sf"/>
</dbReference>
<dbReference type="InterPro" id="IPR006067">
    <property type="entry name" value="NO2/SO3_Rdtase_4Fe4S_dom"/>
</dbReference>
<dbReference type="InterPro" id="IPR045169">
    <property type="entry name" value="NO2/SO3_Rdtase_4Fe4S_prot"/>
</dbReference>
<dbReference type="InterPro" id="IPR045854">
    <property type="entry name" value="NO2/SO3_Rdtase_4Fe4S_sf"/>
</dbReference>
<dbReference type="InterPro" id="IPR006066">
    <property type="entry name" value="NO2/SO3_Rdtase_FeS/sirohaem_BS"/>
</dbReference>
<dbReference type="NCBIfam" id="NF010029">
    <property type="entry name" value="PRK13504.1"/>
    <property type="match status" value="1"/>
</dbReference>
<dbReference type="PANTHER" id="PTHR11493:SF47">
    <property type="entry name" value="SULFITE REDUCTASE [NADPH] SUBUNIT BETA"/>
    <property type="match status" value="1"/>
</dbReference>
<dbReference type="PANTHER" id="PTHR11493">
    <property type="entry name" value="SULFITE REDUCTASE [NADPH] SUBUNIT BETA-RELATED"/>
    <property type="match status" value="1"/>
</dbReference>
<dbReference type="Pfam" id="PF01077">
    <property type="entry name" value="NIR_SIR"/>
    <property type="match status" value="1"/>
</dbReference>
<dbReference type="Pfam" id="PF03460">
    <property type="entry name" value="NIR_SIR_ferr"/>
    <property type="match status" value="2"/>
</dbReference>
<dbReference type="PRINTS" id="PR00397">
    <property type="entry name" value="SIROHAEM"/>
</dbReference>
<dbReference type="SUPFAM" id="SSF56014">
    <property type="entry name" value="Nitrite and sulphite reductase 4Fe-4S domain-like"/>
    <property type="match status" value="2"/>
</dbReference>
<dbReference type="SUPFAM" id="SSF55124">
    <property type="entry name" value="Nitrite/Sulfite reductase N-terminal domain-like"/>
    <property type="match status" value="2"/>
</dbReference>
<dbReference type="PROSITE" id="PS00365">
    <property type="entry name" value="NIR_SIR"/>
    <property type="match status" value="1"/>
</dbReference>
<accession>B0SNL6</accession>